<proteinExistence type="inferred from homology"/>
<accession>C7GQ59</accession>
<feature type="transit peptide" description="Mitochondrion" evidence="2">
    <location>
        <begin position="1"/>
        <end position="76"/>
    </location>
</feature>
<feature type="chain" id="PRO_0000402272" description="Mitochondrial 15S rRNA processing factor CCM1" evidence="2">
    <location>
        <begin position="77"/>
        <end position="864"/>
    </location>
</feature>
<feature type="repeat" description="PPR 1" evidence="3">
    <location>
        <begin position="319"/>
        <end position="353"/>
    </location>
</feature>
<feature type="repeat" description="PPR 2" evidence="3">
    <location>
        <begin position="356"/>
        <end position="390"/>
    </location>
</feature>
<gene>
    <name type="primary">CCM1</name>
    <name type="synonym">DMR1</name>
    <name type="synonym">RRG2</name>
    <name type="ORF">C1Q_02460</name>
</gene>
<reference key="1">
    <citation type="journal article" date="2009" name="Genome Res.">
        <title>Genome structure of a Saccharomyces cerevisiae strain widely used in bioethanol production.</title>
        <authorList>
            <person name="Argueso J.L."/>
            <person name="Carazzolle M.F."/>
            <person name="Mieczkowski P.A."/>
            <person name="Duarte F.M."/>
            <person name="Netto O.V.C."/>
            <person name="Missawa S.K."/>
            <person name="Galzerani F."/>
            <person name="Costa G.G.L."/>
            <person name="Vidal R.O."/>
            <person name="Noronha M.F."/>
            <person name="Dominska M."/>
            <person name="Andrietta M.G.S."/>
            <person name="Andrietta S.R."/>
            <person name="Cunha A.F."/>
            <person name="Gomes L.H."/>
            <person name="Tavares F.C.A."/>
            <person name="Alcarde A.R."/>
            <person name="Dietrich F.S."/>
            <person name="McCusker J.H."/>
            <person name="Petes T.D."/>
            <person name="Pereira G.A.G."/>
        </authorList>
    </citation>
    <scope>NUCLEOTIDE SEQUENCE [LARGE SCALE GENOMIC DNA]</scope>
    <source>
        <strain>JAY291</strain>
    </source>
</reference>
<organism>
    <name type="scientific">Saccharomyces cerevisiae (strain JAY291)</name>
    <name type="common">Baker's yeast</name>
    <dbReference type="NCBI Taxonomy" id="574961"/>
    <lineage>
        <taxon>Eukaryota</taxon>
        <taxon>Fungi</taxon>
        <taxon>Dikarya</taxon>
        <taxon>Ascomycota</taxon>
        <taxon>Saccharomycotina</taxon>
        <taxon>Saccharomycetes</taxon>
        <taxon>Saccharomycetales</taxon>
        <taxon>Saccharomycetaceae</taxon>
        <taxon>Saccharomyces</taxon>
    </lineage>
</organism>
<keyword id="KW-0496">Mitochondrion</keyword>
<keyword id="KW-0507">mRNA processing</keyword>
<keyword id="KW-0508">mRNA splicing</keyword>
<keyword id="KW-0677">Repeat</keyword>
<keyword id="KW-0809">Transit peptide</keyword>
<evidence type="ECO:0000250" key="1">
    <source>
        <dbReference type="UniProtKB" id="P48237"/>
    </source>
</evidence>
<evidence type="ECO:0000255" key="2"/>
<evidence type="ECO:0000255" key="3">
    <source>
        <dbReference type="PROSITE-ProRule" id="PRU00708"/>
    </source>
</evidence>
<evidence type="ECO:0000305" key="4"/>
<protein>
    <recommendedName>
        <fullName>Mitochondrial 15S rRNA processing factor CCM1</fullName>
    </recommendedName>
    <alternativeName>
        <fullName>COB and COX1 mRNA maturation protein 1</fullName>
    </alternativeName>
    <alternativeName>
        <fullName>Degradation of mitochondrial rRNA protein 1</fullName>
    </alternativeName>
    <alternativeName>
        <fullName>Required for respiratory growth protein 2</fullName>
    </alternativeName>
</protein>
<comment type="function">
    <text evidence="1">Regulates mitochondrial small subunit maturation by controlling 15S rRNA 5'-end processing. Localizes to the 5' precursor of the 15S rRNA in a position that is subsequently occupied by mS47 in the mature yeast mtSSU. Uses structure and sequence-specific RNA recognition, binding to a single-stranded region of the precursor and specifically recognizing bases -6 to -1. The exchange of Ccm1 for mS47 is coupled to the irreversible removal of precursor rRNA that is accompanied by conformational changes of the mitoribosomal proteins uS5m and mS26. These conformational changes signal completion of 5'-end rRNA processing through protection of the mature 5'-end of the 15S rRNA and stabilization of mS47. The removal of the 5' precursor together with the dissociation of Ccm1 may be catalyzed by the 5'-3' exoribonuclease Pet127. Involved in the specific removal of group I introns in mitochondrial encoded transcripts.</text>
</comment>
<comment type="subunit">
    <text evidence="1">Binds to mitochondrial small subunit 15S rRNA.</text>
</comment>
<comment type="subcellular location">
    <subcellularLocation>
        <location evidence="1">Mitochondrion</location>
    </subcellularLocation>
</comment>
<comment type="miscellaneous">
    <text evidence="1">Involved in mitochondrial-nuclear incompatibility, a major determinant in reproductive isolation between species, through hybrid incompatibility of Ccm1 and its interacting partner 15S rRNA between yeast species.</text>
</comment>
<comment type="similarity">
    <text evidence="4">Belongs to the CCM1 family.</text>
</comment>
<dbReference type="EMBL" id="ACFL01000112">
    <property type="protein sequence ID" value="EEU07046.1"/>
    <property type="molecule type" value="Genomic_DNA"/>
</dbReference>
<dbReference type="SMR" id="C7GQ59"/>
<dbReference type="Proteomes" id="UP000008073">
    <property type="component" value="Unassembled WGS sequence"/>
</dbReference>
<dbReference type="GO" id="GO:0005739">
    <property type="term" value="C:mitochondrion"/>
    <property type="evidence" value="ECO:0007669"/>
    <property type="project" value="UniProtKB-SubCell"/>
</dbReference>
<dbReference type="GO" id="GO:0031930">
    <property type="term" value="P:mitochondria-nucleus signaling pathway"/>
    <property type="evidence" value="ECO:0007669"/>
    <property type="project" value="TreeGrafter"/>
</dbReference>
<dbReference type="GO" id="GO:0006397">
    <property type="term" value="P:mRNA processing"/>
    <property type="evidence" value="ECO:0007669"/>
    <property type="project" value="UniProtKB-KW"/>
</dbReference>
<dbReference type="GO" id="GO:0008380">
    <property type="term" value="P:RNA splicing"/>
    <property type="evidence" value="ECO:0007669"/>
    <property type="project" value="UniProtKB-KW"/>
</dbReference>
<dbReference type="Gene3D" id="1.25.40.10">
    <property type="entry name" value="Tetratricopeptide repeat domain"/>
    <property type="match status" value="1"/>
</dbReference>
<dbReference type="InterPro" id="IPR002885">
    <property type="entry name" value="Pentatricopeptide_rpt"/>
</dbReference>
<dbReference type="InterPro" id="IPR011990">
    <property type="entry name" value="TPR-like_helical_dom_sf"/>
</dbReference>
<dbReference type="NCBIfam" id="TIGR00756">
    <property type="entry name" value="PPR"/>
    <property type="match status" value="1"/>
</dbReference>
<dbReference type="PANTHER" id="PTHR47936:SF1">
    <property type="entry name" value="PENTATRICOPEPTIDE REPEAT-CONTAINING PROTEIN GUN1, CHLOROPLASTIC"/>
    <property type="match status" value="1"/>
</dbReference>
<dbReference type="PANTHER" id="PTHR47936">
    <property type="entry name" value="PPR_LONG DOMAIN-CONTAINING PROTEIN"/>
    <property type="match status" value="1"/>
</dbReference>
<dbReference type="Pfam" id="PF13041">
    <property type="entry name" value="PPR_2"/>
    <property type="match status" value="1"/>
</dbReference>
<dbReference type="PROSITE" id="PS51375">
    <property type="entry name" value="PPR"/>
    <property type="match status" value="2"/>
</dbReference>
<name>CCM1_YEAS2</name>
<sequence>MYMARCGPKNNVLCFPFQLSFLFSKRLINKRFKYTLQTEDEKDMMGSLSKNKIITPEDVEFKLAQLREFSNTLKERIHNTKSVNSDGHQSNSIAPISEDSRNVNVTKISSVPNEEKSKNLSDLIHSSFLEKMDHLVPKVIRERVADDDILAKNLFDRSHSNWAPVIDRLYVSEKRFMDIDSREFSVWLNGTVKYLPFHSILHLDEMLLEQINGDVVKFNTHMYECIFNNLGNLKPTNFNQDGTNDKVILKMKELLERYDKALKITEERINKKEGFPSKVPKMTQAILNNCLKYSTKCSSFHDMDYFITKFRDDYGITPNKQNLTTVIQFYSRKEMTKQAWNTFDTMKFLSTKHFPDICTYNTMLRICEKERNFPKALDLFQEIQDHNIKPTTNTYIMMARVLASSSSNAVVSEGKSDSLRLLGWKYLHELEDKNLYRHKKDDLNLFLAMMALAAFDGDIELSRALYYLFIAKKYKTLCANWKGNILVDQDTIWKSTLMPEMLNYLMLAYARFDPRNLPVLSGYEKGIELRRKFLREFDSSMRLDDTDKLVKFKLPFLPISDLNSEAQVLAESNAIWSFNLENGGTRNTLTSSNEAALEDIKKYRQLLDSFAQEAEDFNEFKFKVMYEVTKMQRESINVNVFNKISLHTYLSIPINLKQQKEFLRRLTFFTFQQHEFEAVIKRLYEGYRNIPSSHTRDQNSISTEAISVSKPETTEDLNLIMHDIWYITCLRHKIMMDTTLYELVMKAAIEFQNEDLAKKVWNDRGKFRTTVPFLKMDQRIRIAKDQKFAHLMVEFFTKQGKYSDAIAIILSSKNRFNWTYSMVRNLHKALEEIEDRNSVEILLDVVNKKSHAKALKWEEQELNM</sequence>